<evidence type="ECO:0000269" key="1">
    <source>
    </source>
</evidence>
<evidence type="ECO:0000305" key="2"/>
<evidence type="ECO:0000312" key="3">
    <source>
        <dbReference type="EMBL" id="AAS77187.1"/>
    </source>
</evidence>
<evidence type="ECO:0000312" key="4">
    <source>
        <dbReference type="EMBL" id="AAU05283.1"/>
    </source>
</evidence>
<organismHost>
    <name type="scientific">Escherichia coli</name>
    <dbReference type="NCBI Taxonomy" id="562"/>
</organismHost>
<reference key="1">
    <citation type="submission" date="2004-01" db="EMBL/GenBank/DDBJ databases">
        <title>Bacteriophage T5 complete genome.</title>
        <authorList>
            <person name="Ksenzenko V.N."/>
            <person name="Kaliman A.V."/>
            <person name="Krutilina A.I."/>
            <person name="Shlyapnikov M.G."/>
        </authorList>
    </citation>
    <scope>NUCLEOTIDE SEQUENCE [LARGE SCALE GENOMIC DNA]</scope>
</reference>
<reference key="2">
    <citation type="journal article" date="2005" name="Virology">
        <title>Complete genome sequence of bacteriophage T5.</title>
        <authorList>
            <person name="Wang J."/>
            <person name="Jiang Y."/>
            <person name="Vincent M."/>
            <person name="Sun Y."/>
            <person name="Yu H."/>
            <person name="Wang J."/>
            <person name="Bao Q."/>
            <person name="Kong H."/>
            <person name="Hu S."/>
        </authorList>
    </citation>
    <scope>NUCLEOTIDE SEQUENCE [LARGE SCALE GENOMIC DNA]</scope>
    <source>
        <strain>ATCC 11303-B5</strain>
    </source>
</reference>
<reference key="3">
    <citation type="journal article" date="2014" name="J. Virol.">
        <title>Insights into bacteriophage T5 structure from analysis of its morphogenesis genes and protein components.</title>
        <authorList>
            <person name="Zivanovic Y."/>
            <person name="Confalonieri F."/>
            <person name="Ponchon L."/>
            <person name="Lurz R."/>
            <person name="Chami M."/>
            <person name="Flayhan A."/>
            <person name="Renouard M."/>
            <person name="Huet A."/>
            <person name="Decottignies P."/>
            <person name="Davidson A.R."/>
            <person name="Breyton C."/>
            <person name="Boulanger P."/>
        </authorList>
    </citation>
    <scope>NUCLEOTIDE SEQUENCE [LARGE SCALE GENOMIC DNA]</scope>
    <scope>SUBCELLULAR LOCATION</scope>
    <scope>FUNCTION</scope>
    <source>
        <strain>St0 deletion mutant</strain>
    </source>
</reference>
<gene>
    <name evidence="3" type="ORF">T5.148</name>
    <name evidence="4" type="ORF">T5p144</name>
</gene>
<name>HCP_BPT5</name>
<dbReference type="EMBL" id="AY543070">
    <property type="protein sequence ID" value="AAS77187.1"/>
    <property type="molecule type" value="Genomic_DNA"/>
</dbReference>
<dbReference type="EMBL" id="AY587007">
    <property type="status" value="NOT_ANNOTATED_CDS"/>
    <property type="molecule type" value="Genomic_DNA"/>
</dbReference>
<dbReference type="EMBL" id="AY692264">
    <property type="protein sequence ID" value="AAU05283.1"/>
    <property type="molecule type" value="Genomic_DNA"/>
</dbReference>
<dbReference type="RefSeq" id="YP_006976.1">
    <property type="nucleotide sequence ID" value="NC_005859.1"/>
</dbReference>
<dbReference type="PDB" id="9ILP">
    <property type="method" value="EM"/>
    <property type="resolution" value="3.40 A"/>
    <property type="chains" value="a/b/c/d/e/f/g/h/i/j/k/l=1-170"/>
</dbReference>
<dbReference type="PDB" id="9IMV">
    <property type="method" value="EM"/>
    <property type="resolution" value="4.00 A"/>
    <property type="chains" value="M/N/O/P/Q/R/S/T/U/V/W/X=1-170"/>
</dbReference>
<dbReference type="PDBsum" id="9ILP"/>
<dbReference type="PDBsum" id="9IMV"/>
<dbReference type="EMDB" id="EMD-60672"/>
<dbReference type="EMDB" id="EMD-60695"/>
<dbReference type="SMR" id="Q6QGD9"/>
<dbReference type="GeneID" id="2777672"/>
<dbReference type="KEGG" id="vg:2777672"/>
<dbReference type="Proteomes" id="UP000002107">
    <property type="component" value="Genome"/>
</dbReference>
<dbReference type="Proteomes" id="UP000002141">
    <property type="component" value="Segment"/>
</dbReference>
<dbReference type="Proteomes" id="UP000002503">
    <property type="component" value="Segment"/>
</dbReference>
<dbReference type="GO" id="GO:0044423">
    <property type="term" value="C:virion component"/>
    <property type="evidence" value="ECO:0007669"/>
    <property type="project" value="UniProtKB-KW"/>
</dbReference>
<dbReference type="GO" id="GO:0019069">
    <property type="term" value="P:viral capsid assembly"/>
    <property type="evidence" value="ECO:0000314"/>
    <property type="project" value="UniProtKB"/>
</dbReference>
<dbReference type="InterPro" id="IPR056472">
    <property type="entry name" value="HCP"/>
</dbReference>
<dbReference type="Pfam" id="PF24163">
    <property type="entry name" value="HCP"/>
    <property type="match status" value="1"/>
</dbReference>
<comment type="function">
    <text evidence="1">Head completion protein that closes the capsid once the viral DNA has been packaged. Probably part of the head-tail connector by binding to the portal protein and to the tail completion protein.</text>
</comment>
<comment type="subcellular location">
    <subcellularLocation>
        <location evidence="1">Virion</location>
    </subcellularLocation>
    <text evidence="1">Minor protein of the capsid.</text>
</comment>
<feature type="chain" id="PRO_0000435556" description="Head completion protein">
    <location>
        <begin position="1"/>
        <end position="170"/>
    </location>
</feature>
<feature type="sequence conflict" description="In Ref. 3; AAU05283." evidence="2" ref="3">
    <original>G</original>
    <variation>D</variation>
    <location>
        <position position="111"/>
    </location>
</feature>
<proteinExistence type="evidence at protein level"/>
<keyword id="KW-0002">3D-structure</keyword>
<keyword id="KW-0426">Late protein</keyword>
<keyword id="KW-1185">Reference proteome</keyword>
<keyword id="KW-0118">Viral capsid assembly</keyword>
<keyword id="KW-1188">Viral release from host cell</keyword>
<keyword id="KW-0946">Virion</keyword>
<protein>
    <recommendedName>
        <fullName>Head completion protein</fullName>
        <shortName>HCP</shortName>
    </recommendedName>
    <alternativeName>
        <fullName>p144</fullName>
    </alternativeName>
</protein>
<accession>Q6QGD9</accession>
<accession>Q66LR9</accession>
<sequence length="170" mass="19210">MQIITAEDYRLYGGLKRPELESGVEVMITAANALITSLLGMDDADAVDQLITTKPTRKKYFLSSPSATSVTKMTINDKEIDPEQYKLYSDGVILLKFNPPEGYMDVEYTQGGFNPMPEDLKLAACMLVDHWHKQDYRQARTIGGETVTFNNTKSGIPEHIRTIIEVYRRV</sequence>
<organism>
    <name type="scientific">Escherichia phage T5</name>
    <name type="common">Enterobacteria phage T5</name>
    <dbReference type="NCBI Taxonomy" id="2695836"/>
    <lineage>
        <taxon>Viruses</taxon>
        <taxon>Duplodnaviria</taxon>
        <taxon>Heunggongvirae</taxon>
        <taxon>Uroviricota</taxon>
        <taxon>Caudoviricetes</taxon>
        <taxon>Demerecviridae</taxon>
        <taxon>Markadamsvirinae</taxon>
        <taxon>Tequintavirus</taxon>
        <taxon>Tequintavirus T5</taxon>
    </lineage>
</organism>